<feature type="chain" id="PRO_0000377954" description="Uncharacterized protein 054L">
    <location>
        <begin position="1"/>
        <end position="309"/>
    </location>
</feature>
<proteinExistence type="predicted"/>
<dbReference type="EMBL" id="DQ643392">
    <property type="protein sequence ID" value="ABF82084.1"/>
    <property type="molecule type" value="Genomic_DNA"/>
</dbReference>
<dbReference type="RefSeq" id="YP_654626.1">
    <property type="nucleotide sequence ID" value="NC_008187.1"/>
</dbReference>
<dbReference type="KEGG" id="vg:4156304"/>
<dbReference type="OrthoDB" id="12549at10239"/>
<dbReference type="Proteomes" id="UP000001358">
    <property type="component" value="Genome"/>
</dbReference>
<dbReference type="InterPro" id="IPR045409">
    <property type="entry name" value="DUF5891"/>
</dbReference>
<dbReference type="Pfam" id="PF19241">
    <property type="entry name" value="DUF5891"/>
    <property type="match status" value="1"/>
</dbReference>
<organismHost>
    <name type="scientific">Aedes vexans</name>
    <name type="common">Inland floodwater mosquito</name>
    <name type="synonym">Culex vexans</name>
    <dbReference type="NCBI Taxonomy" id="7163"/>
</organismHost>
<organismHost>
    <name type="scientific">Culex territans</name>
    <dbReference type="NCBI Taxonomy" id="42431"/>
</organismHost>
<organismHost>
    <name type="scientific">Culiseta annulata</name>
    <dbReference type="NCBI Taxonomy" id="332058"/>
</organismHost>
<organismHost>
    <name type="scientific">Ochlerotatus sollicitans</name>
    <name type="common">eastern saltmarsh mosquito</name>
    <dbReference type="NCBI Taxonomy" id="310513"/>
</organismHost>
<organismHost>
    <name type="scientific">Ochlerotatus taeniorhynchus</name>
    <name type="common">Black salt marsh mosquito</name>
    <name type="synonym">Aedes taeniorhynchus</name>
    <dbReference type="NCBI Taxonomy" id="329105"/>
</organismHost>
<organismHost>
    <name type="scientific">Psorophora ferox</name>
    <dbReference type="NCBI Taxonomy" id="7183"/>
</organismHost>
<sequence>MASEATVESVETKVESPIVESPVDQGLLESIKNFMDDLAVVTENENFQDYHTIVRRIDETKVKSYNKLVGGFREFFSLNKTALMEGNFEGLIEPHISYKTESGSFFFNFQTTYLETDEANQEIIKEHLNHIWAQIRSENKCPEQLYIDEIFQKLKNKDQLTMDDQLIRDLFTKFQTANFNVTALIRAGCSKAREFLTNNGSQKSSSTFRLIETIENVNVDNFTQMDFMALISKISAIFSESGESNPLNLCLSSLFGGGNTNQPSLTSMFPFPTPPLPDNVLLDNLDQLTLEQQSETTGDDDHHSFEPEK</sequence>
<protein>
    <recommendedName>
        <fullName>Uncharacterized protein 054L</fullName>
    </recommendedName>
</protein>
<keyword id="KW-1185">Reference proteome</keyword>
<organism>
    <name type="scientific">Invertebrate iridescent virus 3</name>
    <name type="common">IIV-3</name>
    <name type="synonym">Mosquito iridescent virus</name>
    <dbReference type="NCBI Taxonomy" id="345201"/>
    <lineage>
        <taxon>Viruses</taxon>
        <taxon>Varidnaviria</taxon>
        <taxon>Bamfordvirae</taxon>
        <taxon>Nucleocytoviricota</taxon>
        <taxon>Megaviricetes</taxon>
        <taxon>Pimascovirales</taxon>
        <taxon>Iridoviridae</taxon>
        <taxon>Betairidovirinae</taxon>
        <taxon>Chloriridovirus</taxon>
    </lineage>
</organism>
<name>054L_IIV3</name>
<reference key="1">
    <citation type="journal article" date="2006" name="J. Virol.">
        <title>Genome of invertebrate iridescent virus type 3 (mosquito iridescent virus).</title>
        <authorList>
            <person name="Delhon G."/>
            <person name="Tulman E.R."/>
            <person name="Afonso C.L."/>
            <person name="Lu Z."/>
            <person name="Becnel J.J."/>
            <person name="Moser B.A."/>
            <person name="Kutish G.F."/>
            <person name="Rock D.L."/>
        </authorList>
    </citation>
    <scope>NUCLEOTIDE SEQUENCE [LARGE SCALE GENOMIC DNA]</scope>
</reference>
<accession>Q197A6</accession>
<gene>
    <name type="ORF">IIV3-054L</name>
</gene>